<keyword id="KW-0997">Cell inner membrane</keyword>
<keyword id="KW-1003">Cell membrane</keyword>
<keyword id="KW-0350">Heme biosynthesis</keyword>
<keyword id="KW-0472">Membrane</keyword>
<keyword id="KW-0808">Transferase</keyword>
<keyword id="KW-0812">Transmembrane</keyword>
<keyword id="KW-1133">Transmembrane helix</keyword>
<dbReference type="EC" id="2.5.1.141" evidence="1"/>
<dbReference type="EMBL" id="CP000450">
    <property type="protein sequence ID" value="ABI60603.1"/>
    <property type="molecule type" value="Genomic_DNA"/>
</dbReference>
<dbReference type="RefSeq" id="WP_011635371.1">
    <property type="nucleotide sequence ID" value="NC_008344.1"/>
</dbReference>
<dbReference type="SMR" id="Q0ADH9"/>
<dbReference type="STRING" id="335283.Neut_2389"/>
<dbReference type="KEGG" id="net:Neut_2389"/>
<dbReference type="eggNOG" id="COG0109">
    <property type="taxonomic scope" value="Bacteria"/>
</dbReference>
<dbReference type="HOGENOM" id="CLU_029631_0_2_4"/>
<dbReference type="OrthoDB" id="9814417at2"/>
<dbReference type="UniPathway" id="UPA00834">
    <property type="reaction ID" value="UER00712"/>
</dbReference>
<dbReference type="Proteomes" id="UP000001966">
    <property type="component" value="Chromosome"/>
</dbReference>
<dbReference type="GO" id="GO:0005886">
    <property type="term" value="C:plasma membrane"/>
    <property type="evidence" value="ECO:0007669"/>
    <property type="project" value="UniProtKB-SubCell"/>
</dbReference>
<dbReference type="GO" id="GO:0008495">
    <property type="term" value="F:protoheme IX farnesyltransferase activity"/>
    <property type="evidence" value="ECO:0007669"/>
    <property type="project" value="UniProtKB-UniRule"/>
</dbReference>
<dbReference type="GO" id="GO:0048034">
    <property type="term" value="P:heme O biosynthetic process"/>
    <property type="evidence" value="ECO:0007669"/>
    <property type="project" value="UniProtKB-UniRule"/>
</dbReference>
<dbReference type="CDD" id="cd13957">
    <property type="entry name" value="PT_UbiA_Cox10"/>
    <property type="match status" value="1"/>
</dbReference>
<dbReference type="Gene3D" id="1.10.357.140">
    <property type="entry name" value="UbiA prenyltransferase"/>
    <property type="match status" value="1"/>
</dbReference>
<dbReference type="HAMAP" id="MF_00154">
    <property type="entry name" value="CyoE_CtaB"/>
    <property type="match status" value="1"/>
</dbReference>
<dbReference type="InterPro" id="IPR006369">
    <property type="entry name" value="Protohaem_IX_farnesylTrfase"/>
</dbReference>
<dbReference type="InterPro" id="IPR000537">
    <property type="entry name" value="UbiA_prenyltransferase"/>
</dbReference>
<dbReference type="InterPro" id="IPR030470">
    <property type="entry name" value="UbiA_prenylTrfase_CS"/>
</dbReference>
<dbReference type="InterPro" id="IPR044878">
    <property type="entry name" value="UbiA_sf"/>
</dbReference>
<dbReference type="NCBIfam" id="TIGR01473">
    <property type="entry name" value="cyoE_ctaB"/>
    <property type="match status" value="1"/>
</dbReference>
<dbReference type="NCBIfam" id="NF003349">
    <property type="entry name" value="PRK04375.1-2"/>
    <property type="match status" value="1"/>
</dbReference>
<dbReference type="PANTHER" id="PTHR43448:SF7">
    <property type="entry name" value="4-HYDROXYBENZOATE SOLANESYLTRANSFERASE"/>
    <property type="match status" value="1"/>
</dbReference>
<dbReference type="PANTHER" id="PTHR43448">
    <property type="entry name" value="PROTOHEME IX FARNESYLTRANSFERASE, MITOCHONDRIAL"/>
    <property type="match status" value="1"/>
</dbReference>
<dbReference type="Pfam" id="PF01040">
    <property type="entry name" value="UbiA"/>
    <property type="match status" value="1"/>
</dbReference>
<dbReference type="PROSITE" id="PS00943">
    <property type="entry name" value="UBIA"/>
    <property type="match status" value="1"/>
</dbReference>
<reference key="1">
    <citation type="journal article" date="2007" name="Environ. Microbiol.">
        <title>Whole-genome analysis of the ammonia-oxidizing bacterium, Nitrosomonas eutropha C91: implications for niche adaptation.</title>
        <authorList>
            <person name="Stein L.Y."/>
            <person name="Arp D.J."/>
            <person name="Berube P.M."/>
            <person name="Chain P.S."/>
            <person name="Hauser L."/>
            <person name="Jetten M.S."/>
            <person name="Klotz M.G."/>
            <person name="Larimer F.W."/>
            <person name="Norton J.M."/>
            <person name="Op den Camp H.J.M."/>
            <person name="Shin M."/>
            <person name="Wei X."/>
        </authorList>
    </citation>
    <scope>NUCLEOTIDE SEQUENCE [LARGE SCALE GENOMIC DNA]</scope>
    <source>
        <strain>DSM 101675 / C91 / Nm57</strain>
    </source>
</reference>
<sequence length="298" mass="33241">MSTNPLVWQQATVRIQQFYRLTKPRVVSLIVFTAVIGMFLSVPGAVPLDKLLLGTIGISLVAGAAAALNCLVEYKFDAIMARTKGRPLPQGKVSVPETLFFLVMVGGLGLFILHQWINPLTMWLTLGTFVGYAIIYTVILKPLTPQNIVIGGASGAMPPVLGWAAITGEISADALLLFLIIFAWTPPHFWALALYRKSDYAKIGMPMLPVTHGEEFTRLHVLLYTIILCIATVLPYLTQMSGLIYLVSVLILDAIFLYYAIRIYLHYTDQIAREAFRYSIIYLALLFTALLVDHYFYF</sequence>
<protein>
    <recommendedName>
        <fullName evidence="1">Protoheme IX farnesyltransferase</fullName>
        <ecNumber evidence="1">2.5.1.141</ecNumber>
    </recommendedName>
    <alternativeName>
        <fullName evidence="1">Heme B farnesyltransferase</fullName>
    </alternativeName>
    <alternativeName>
        <fullName evidence="1">Heme O synthase</fullName>
    </alternativeName>
</protein>
<proteinExistence type="inferred from homology"/>
<accession>Q0ADH9</accession>
<name>COXX_NITEC</name>
<organism>
    <name type="scientific">Nitrosomonas eutropha (strain DSM 101675 / C91 / Nm57)</name>
    <dbReference type="NCBI Taxonomy" id="335283"/>
    <lineage>
        <taxon>Bacteria</taxon>
        <taxon>Pseudomonadati</taxon>
        <taxon>Pseudomonadota</taxon>
        <taxon>Betaproteobacteria</taxon>
        <taxon>Nitrosomonadales</taxon>
        <taxon>Nitrosomonadaceae</taxon>
        <taxon>Nitrosomonas</taxon>
    </lineage>
</organism>
<feature type="chain" id="PRO_0000327100" description="Protoheme IX farnesyltransferase">
    <location>
        <begin position="1"/>
        <end position="298"/>
    </location>
</feature>
<feature type="transmembrane region" description="Helical" evidence="1">
    <location>
        <begin position="26"/>
        <end position="46"/>
    </location>
</feature>
<feature type="transmembrane region" description="Helical" evidence="1">
    <location>
        <begin position="52"/>
        <end position="72"/>
    </location>
</feature>
<feature type="transmembrane region" description="Helical" evidence="1">
    <location>
        <begin position="93"/>
        <end position="113"/>
    </location>
</feature>
<feature type="transmembrane region" description="Helical" evidence="1">
    <location>
        <begin position="120"/>
        <end position="140"/>
    </location>
</feature>
<feature type="transmembrane region" description="Helical" evidence="1">
    <location>
        <begin position="148"/>
        <end position="168"/>
    </location>
</feature>
<feature type="transmembrane region" description="Helical" evidence="1">
    <location>
        <begin position="174"/>
        <end position="194"/>
    </location>
</feature>
<feature type="transmembrane region" description="Helical" evidence="1">
    <location>
        <begin position="219"/>
        <end position="239"/>
    </location>
</feature>
<feature type="transmembrane region" description="Helical" evidence="1">
    <location>
        <begin position="241"/>
        <end position="261"/>
    </location>
</feature>
<feature type="transmembrane region" description="Helical" evidence="1">
    <location>
        <begin position="278"/>
        <end position="298"/>
    </location>
</feature>
<evidence type="ECO:0000255" key="1">
    <source>
        <dbReference type="HAMAP-Rule" id="MF_00154"/>
    </source>
</evidence>
<comment type="function">
    <text evidence="1">Converts heme B (protoheme IX) to heme O by substitution of the vinyl group on carbon 2 of heme B porphyrin ring with a hydroxyethyl farnesyl side group.</text>
</comment>
<comment type="catalytic activity">
    <reaction evidence="1">
        <text>heme b + (2E,6E)-farnesyl diphosphate + H2O = Fe(II)-heme o + diphosphate</text>
        <dbReference type="Rhea" id="RHEA:28070"/>
        <dbReference type="ChEBI" id="CHEBI:15377"/>
        <dbReference type="ChEBI" id="CHEBI:33019"/>
        <dbReference type="ChEBI" id="CHEBI:60344"/>
        <dbReference type="ChEBI" id="CHEBI:60530"/>
        <dbReference type="ChEBI" id="CHEBI:175763"/>
        <dbReference type="EC" id="2.5.1.141"/>
    </reaction>
</comment>
<comment type="pathway">
    <text evidence="1">Porphyrin-containing compound metabolism; heme O biosynthesis; heme O from protoheme: step 1/1.</text>
</comment>
<comment type="subcellular location">
    <subcellularLocation>
        <location evidence="1">Cell inner membrane</location>
        <topology evidence="1">Multi-pass membrane protein</topology>
    </subcellularLocation>
</comment>
<comment type="miscellaneous">
    <text evidence="1">Carbon 2 of the heme B porphyrin ring is defined according to the Fischer nomenclature.</text>
</comment>
<comment type="similarity">
    <text evidence="1">Belongs to the UbiA prenyltransferase family. Protoheme IX farnesyltransferase subfamily.</text>
</comment>
<gene>
    <name evidence="1" type="primary">ctaB</name>
    <name type="ordered locus">Neut_2389</name>
</gene>